<feature type="signal peptide" evidence="3">
    <location>
        <begin position="1"/>
        <end position="23"/>
    </location>
</feature>
<feature type="chain" id="PRO_0000428303" description="Phosphate-binding protein PstS 1">
    <location>
        <begin position="24"/>
        <end position="374"/>
    </location>
</feature>
<feature type="region of interest" description="Disordered" evidence="4">
    <location>
        <begin position="25"/>
        <end position="48"/>
    </location>
</feature>
<feature type="binding site" evidence="2">
    <location>
        <begin position="58"/>
        <end position="60"/>
    </location>
    <ligand>
        <name>phosphate</name>
        <dbReference type="ChEBI" id="CHEBI:43474"/>
    </ligand>
</feature>
<feature type="binding site" evidence="2">
    <location>
        <position position="88"/>
    </location>
    <ligand>
        <name>phosphate</name>
        <dbReference type="ChEBI" id="CHEBI:43474"/>
    </ligand>
</feature>
<feature type="binding site" evidence="2">
    <location>
        <position position="106"/>
    </location>
    <ligand>
        <name>phosphate</name>
        <dbReference type="ChEBI" id="CHEBI:43474"/>
    </ligand>
</feature>
<feature type="binding site" evidence="2">
    <location>
        <begin position="189"/>
        <end position="191"/>
    </location>
    <ligand>
        <name>phosphate</name>
        <dbReference type="ChEBI" id="CHEBI:43474"/>
    </ligand>
</feature>
<feature type="lipid moiety-binding region" description="N-palmitoyl cysteine" evidence="3">
    <location>
        <position position="24"/>
    </location>
</feature>
<feature type="lipid moiety-binding region" description="S-diacylglycerol cysteine" evidence="3">
    <location>
        <position position="24"/>
    </location>
</feature>
<keyword id="KW-1003">Cell membrane</keyword>
<keyword id="KW-0449">Lipoprotein</keyword>
<keyword id="KW-0472">Membrane</keyword>
<keyword id="KW-0564">Palmitate</keyword>
<keyword id="KW-0592">Phosphate transport</keyword>
<keyword id="KW-1185">Reference proteome</keyword>
<keyword id="KW-0732">Signal</keyword>
<keyword id="KW-0813">Transport</keyword>
<evidence type="ECO:0000250" key="1"/>
<evidence type="ECO:0000250" key="2">
    <source>
        <dbReference type="UniProtKB" id="P9WGT7"/>
    </source>
</evidence>
<evidence type="ECO:0000255" key="3">
    <source>
        <dbReference type="PROSITE-ProRule" id="PRU00303"/>
    </source>
</evidence>
<evidence type="ECO:0000256" key="4">
    <source>
        <dbReference type="SAM" id="MobiDB-lite"/>
    </source>
</evidence>
<evidence type="ECO:0000305" key="5"/>
<name>PSTS1_MYCTO</name>
<accession>P9WGU0</accession>
<accession>L0T854</accession>
<accession>O05868</accession>
<accession>P15712</accession>
<dbReference type="EMBL" id="AE000516">
    <property type="protein sequence ID" value="AAK45208.1"/>
    <property type="molecule type" value="Genomic_DNA"/>
</dbReference>
<dbReference type="PIR" id="F70584">
    <property type="entry name" value="F70584"/>
</dbReference>
<dbReference type="SMR" id="P9WGU0"/>
<dbReference type="KEGG" id="mtc:MT0961"/>
<dbReference type="PATRIC" id="fig|83331.31.peg.1031"/>
<dbReference type="HOGENOM" id="CLU_034528_1_2_11"/>
<dbReference type="Proteomes" id="UP000001020">
    <property type="component" value="Chromosome"/>
</dbReference>
<dbReference type="GO" id="GO:0043190">
    <property type="term" value="C:ATP-binding cassette (ABC) transporter complex"/>
    <property type="evidence" value="ECO:0007669"/>
    <property type="project" value="InterPro"/>
</dbReference>
<dbReference type="GO" id="GO:0042301">
    <property type="term" value="F:phosphate ion binding"/>
    <property type="evidence" value="ECO:0007669"/>
    <property type="project" value="InterPro"/>
</dbReference>
<dbReference type="GO" id="GO:0035435">
    <property type="term" value="P:phosphate ion transmembrane transport"/>
    <property type="evidence" value="ECO:0007669"/>
    <property type="project" value="InterPro"/>
</dbReference>
<dbReference type="CDD" id="cd01006">
    <property type="entry name" value="PBP2_phosphate_binding"/>
    <property type="match status" value="1"/>
</dbReference>
<dbReference type="FunFam" id="3.40.190.10:FF:000235">
    <property type="entry name" value="Phosphate-binding protein PstS"/>
    <property type="match status" value="1"/>
</dbReference>
<dbReference type="Gene3D" id="3.40.190.10">
    <property type="entry name" value="Periplasmic binding protein-like II"/>
    <property type="match status" value="2"/>
</dbReference>
<dbReference type="InterPro" id="IPR005673">
    <property type="entry name" value="ABC_phos-bd_PstS"/>
</dbReference>
<dbReference type="InterPro" id="IPR024370">
    <property type="entry name" value="PBP_domain"/>
</dbReference>
<dbReference type="InterPro" id="IPR050962">
    <property type="entry name" value="Phosphate-bind_PstS"/>
</dbReference>
<dbReference type="NCBIfam" id="TIGR00975">
    <property type="entry name" value="3a0107s03"/>
    <property type="match status" value="1"/>
</dbReference>
<dbReference type="PANTHER" id="PTHR42996">
    <property type="entry name" value="PHOSPHATE-BINDING PROTEIN PSTS"/>
    <property type="match status" value="1"/>
</dbReference>
<dbReference type="PANTHER" id="PTHR42996:SF1">
    <property type="entry name" value="PHOSPHATE-BINDING PROTEIN PSTS"/>
    <property type="match status" value="1"/>
</dbReference>
<dbReference type="Pfam" id="PF12849">
    <property type="entry name" value="PBP_like_2"/>
    <property type="match status" value="1"/>
</dbReference>
<dbReference type="PIRSF" id="PIRSF002756">
    <property type="entry name" value="PstS"/>
    <property type="match status" value="1"/>
</dbReference>
<dbReference type="SUPFAM" id="SSF53850">
    <property type="entry name" value="Periplasmic binding protein-like II"/>
    <property type="match status" value="1"/>
</dbReference>
<dbReference type="PROSITE" id="PS51257">
    <property type="entry name" value="PROKAR_LIPOPROTEIN"/>
    <property type="match status" value="1"/>
</dbReference>
<protein>
    <recommendedName>
        <fullName>Phosphate-binding protein PstS 1</fullName>
        <shortName>PBP 1</shortName>
        <shortName>PstS-1</shortName>
    </recommendedName>
    <alternativeName>
        <fullName>Antigen Ag78</fullName>
    </alternativeName>
    <alternativeName>
        <fullName>Protein antigen B</fullName>
        <shortName>PAB</shortName>
    </alternativeName>
</protein>
<sequence>MKIRLHTLLAVLTAAPLLLAAAGCGSKPPSGSPETGAGAGTVATTPASSPVTLAETGSTLLYPLFNLWGPAFHERYPNVTITAQGTGSGAGIAQAAAGTVNIGASDAYLSEGDMAAHKGLMNIALAISAQQVNYNLPGVSEHLKLNGKVLAAMYQGTIKTWDDPQIAALNPGVNLPGTAVVPLHRSDGSGDTFLFTQYLSKQDPEGWGKSPGFGTTVDFPAVPGALGENGNGGMVTGCAETPGCVAYIGISFLDQASQRGLGEAQLGNSSGNFLLPDAQSIQAAAAGFASKTPANQAISMIDGPAPDGYPIINYEYAIVNNRQKDAATAQTLQAFLHWAITDGNKASFLDQVHFQPLPPAVVKLSDALIATISS</sequence>
<comment type="function">
    <text evidence="1">Part of the ABC transporter complex PstSACB involved in phosphate import.</text>
</comment>
<comment type="subunit">
    <text evidence="5">The complex is composed of two ATP-binding proteins (PstB), two transmembrane proteins (PstC and PstA) and a solute-binding protein (PstS).</text>
</comment>
<comment type="subcellular location">
    <subcellularLocation>
        <location evidence="5">Cell membrane</location>
        <topology evidence="5">Lipid-anchor</topology>
    </subcellularLocation>
</comment>
<comment type="similarity">
    <text evidence="5">Belongs to the PstS family.</text>
</comment>
<organism>
    <name type="scientific">Mycobacterium tuberculosis (strain CDC 1551 / Oshkosh)</name>
    <dbReference type="NCBI Taxonomy" id="83331"/>
    <lineage>
        <taxon>Bacteria</taxon>
        <taxon>Bacillati</taxon>
        <taxon>Actinomycetota</taxon>
        <taxon>Actinomycetes</taxon>
        <taxon>Mycobacteriales</taxon>
        <taxon>Mycobacteriaceae</taxon>
        <taxon>Mycobacterium</taxon>
        <taxon>Mycobacterium tuberculosis complex</taxon>
    </lineage>
</organism>
<gene>
    <name type="primary">pstS1</name>
    <name type="synonym">phoS1</name>
    <name type="ordered locus">MT0961</name>
</gene>
<proteinExistence type="inferred from homology"/>
<reference key="1">
    <citation type="journal article" date="2002" name="J. Bacteriol.">
        <title>Whole-genome comparison of Mycobacterium tuberculosis clinical and laboratory strains.</title>
        <authorList>
            <person name="Fleischmann R.D."/>
            <person name="Alland D."/>
            <person name="Eisen J.A."/>
            <person name="Carpenter L."/>
            <person name="White O."/>
            <person name="Peterson J.D."/>
            <person name="DeBoy R.T."/>
            <person name="Dodson R.J."/>
            <person name="Gwinn M.L."/>
            <person name="Haft D.H."/>
            <person name="Hickey E.K."/>
            <person name="Kolonay J.F."/>
            <person name="Nelson W.C."/>
            <person name="Umayam L.A."/>
            <person name="Ermolaeva M.D."/>
            <person name="Salzberg S.L."/>
            <person name="Delcher A."/>
            <person name="Utterback T.R."/>
            <person name="Weidman J.F."/>
            <person name="Khouri H.M."/>
            <person name="Gill J."/>
            <person name="Mikula A."/>
            <person name="Bishai W."/>
            <person name="Jacobs W.R. Jr."/>
            <person name="Venter J.C."/>
            <person name="Fraser C.M."/>
        </authorList>
    </citation>
    <scope>NUCLEOTIDE SEQUENCE [LARGE SCALE GENOMIC DNA]</scope>
    <source>
        <strain>CDC 1551 / Oshkosh</strain>
    </source>
</reference>